<organism>
    <name type="scientific">Epichloe festucae (strain Fl1)</name>
    <dbReference type="NCBI Taxonomy" id="877507"/>
    <lineage>
        <taxon>Eukaryota</taxon>
        <taxon>Fungi</taxon>
        <taxon>Dikarya</taxon>
        <taxon>Ascomycota</taxon>
        <taxon>Pezizomycotina</taxon>
        <taxon>Sordariomycetes</taxon>
        <taxon>Hypocreomycetidae</taxon>
        <taxon>Hypocreales</taxon>
        <taxon>Clavicipitaceae</taxon>
        <taxon>Epichloe</taxon>
    </lineage>
</organism>
<evidence type="ECO:0000250" key="1">
    <source>
        <dbReference type="UniProtKB" id="A0A144KPJ6"/>
    </source>
</evidence>
<evidence type="ECO:0000255" key="2"/>
<evidence type="ECO:0000255" key="3">
    <source>
        <dbReference type="PROSITE-ProRule" id="PRU00258"/>
    </source>
</evidence>
<evidence type="ECO:0000269" key="4">
    <source>
    </source>
</evidence>
<evidence type="ECO:0000303" key="5">
    <source>
    </source>
</evidence>
<evidence type="ECO:0000305" key="6"/>
<evidence type="ECO:0000305" key="7">
    <source>
    </source>
</evidence>
<name>SIDN_EPIFF</name>
<protein>
    <recommendedName>
        <fullName evidence="5">Nonribosomal peptide synthetase sidN</fullName>
        <shortName evidence="5">NPRS sidN</shortName>
        <ecNumber evidence="7">6.3.2.-</ecNumber>
    </recommendedName>
    <alternativeName>
        <fullName evidence="5">Epichloenin A synthetase</fullName>
    </alternativeName>
    <alternativeName>
        <fullName evidence="5">Extracellular siderophore synthetase N</fullName>
    </alternativeName>
</protein>
<sequence>MDQVAVTRFPALHCFEGPKQRQSVGSNARHHTIRGNIDTQHQSQDETLRRFANFVSSLVGDDEISFDFIISPSNGGSDIAESGTAQAKKDPTQATSDYNGITLLRSTPFVESGHSEFGIIIRRQLRNNDSSLFTLEKSFVVTVDKSSYSVRICRDLVPRPFLQSISTSLCSYMGWTNPSQHSEEESNQELQLQTLNFQGQSVLNHPPLMTPPDFESQLCLPKRPQEYAKPLLHNAFLARVRENPGRIALDALSSTGRATYTYKNLDDLSSDLAEKILQIIGVDADHTDRNITVALSTSAELYIAWLGILKAGCVVCPVPTDCPSELLQHMTGLTSSKVVLGSAETLEYFDRIIGDSSIFTFINVETIARQNCEHLLQRPPPLVNTSENDVAYILFTSGSTGKPKGVQITHHAAVCSIAANIAASPHSFESGPSSIRWFQMAAPTFDLSVLEIFVTFSIGGTICACDRTMMLTDAESVITQLEATITMTTPTLASLLRPSRIPKLREVWVCGEMLKREASELFARDRDPSVADGDTNLLNAYGPTEATITCTVDARVSLKHRGSLIGPPLPTCSNIILDSSEPPKAVPLGFAGELAIGGPQLSIGYLKSPEKTAAAFVDVESYGKLYRTGDMARLIMGPDGTLQVEFLGRLSSDQIKILGRRVELGEIEAGLRNPLIAEVAAVALKPEVSGLPQVQLIAVVTCRTEKSDSDVLAACQERAENVLQPHMRPSIYYVMDKLPRLASEKTDRKTLAKYCLSPEKSGLRRLRNGDVDGHREAGSSSIPMLQSVIEAVSSVAIVGSDKITSATTLLSLGIDSLRSVRLLQNFREIGIEGLQVTDILTCHNLGDLDTKAQQALNRSTPSLAKARNLQTLLIDFENRHKKQCLSALGFNEDNIVSFLPVTTSQAVALASFLLTADANGFQAAPGGKAFIQHTVYTVKPELNSQRIVESWTRVLSRYDIMRSVFVEVNDDLTPFAQCILSPDHEAAQIKPHFYSAKSDNECKDVIQAAQKAAEEKISLYEPPRRLSVVQSPTQTIIVFSQLHSVFDGGSETLLLEDIEREYFGQPSIERTGVLTAVERHFSENRAEAAQFWQAYMDGFLSPSFPCLRSTVPGPDENVCGGYSFMSDLSLESLTRQAAALQCSPLSILQAAWAQILFTYTGERDVAFGNTMSDRFTTELANCSAPVLTIQSTRVNLNEENDKRNIDILLERTAQNTAALSYLHTPITGARYDTTIALQMYLNSGKGEALYERVCHPGMHNDLAVMIEVYPDRSGLLEFRLTYQTALLDDDAAYTMLANLARVTNHIMSYPNAKYMDPSVWTSLQGPGQLEQINGYHHLGQQLLHECVAEFAQKSPNAIALAFYDDLSVDHPKVQLTYADLEVKATRVAGFLMSQLPAKEGSKHVVPIFMEKCPELYITLLGILKAGAAWCPVDPSYPPARQIFLIEKTTAGICFTSKSTTSQLSSILPASFKSISVSDLLEGGSCSTSRTLKASESARLDNLSIQRSDIAYVIFTSGTTGTPKGVPISHESASLSIDSYIQRVNVDLDLRGCEVRFLQFANYTFDAFVCDVFTAWRLGGTLVSATRDILLGSFIALANKVGATHTSMTPTFASTLQPQDFETLRVATMGGEVLPQILADKWKSRMSLCNVYGPAETAINTTINRLSAASRSGNIGTALPAVNAYVMASGYPVMKHMLGELVISGPQLSPGYWDNVHSSNNRFRWNSTLQCRVYHTGDYVRQLADGSFDFVGRKDDLVKIRGMRVELTEISTVCSAGHESVVHSEVLLAKLPGSTQSSLICFVDCGLQKSSDVDNFCILKNEEAQLVAQAVKRHATAELPRHMVPDVFMPLNCLPRNQSSKVNRKRLLEVVGREWSMQPMSPVADEQVDPAWCIKHRPLLEKIQGVIKIMPTTLSRSTTLSELGVDSIGAIRLSSRLKNDGHDISAIQVLDSVTIEDLINHLSVKRQGTSNWKTLLSRYLDHWKPLVSRHLARDPAHFSLVPTTVFQDGMLVETLRDPMLYWASYSWRLPSTVDIARVRQAWQHVSKNHDILKVSFVPTAYFEQEETQSSGPSSMFIQLIDYNASMDWQEIVSDSGDWQQSIHALCANLQRTQHENNFSSPPWRVTILAQQDQRIMNLTIHHSLCDGEMLRSLMHDVAWAYSTAELPVKRCQVQEAVSRLAVRYSEPEGHKFWGDMLSPLVSQTSLGDATSNSPKAVVRKIRHRTTELQATRSTSKLTGLARRLGASSLSPLFRVTFGIMLTEYYEQQSVLFGEVRSERLLESQLVGAMAPLSATYPVPFRSSGNLKDMVHSQQILVMDSIRYGPPQPSDVRKILKKSRDEALYSAVYVLRQRSEDDGGSLAPWEEFKDIFEIFVDHEFALNVLEGADDTVTISLSVDETLMSSSAQAIFLQQLDALLIAFDKSAPEISLSGLNAHFPLDLLSIASSKVSAQYTSTVPPSHYIETWAKTHPEWKAVEVATGFLGSQEIVTEDWTYKKLNETANQVANLIIYASLHGRAIAVSLDRSLIAFAIIVGIMKSGNTYVPIEAGLPNDRKSFLLRDSRAAMAFVCDNKLDGVELPPETKVLDTKNKSFIENLSTQDTSDILNNYPENLDAYLLYTSGSTGAPKGVRVSRHNLSSFSDAWGKLIGNVAPKSLELGGVGKFLCLASRAFDVHIGEMFLAWRFGLCAVTGERLSMLDDLPRTFRELGVTHAGIVPSLLDQTGLVPEDAPHLVYLGVGGEKMTPRTQQIWSSSDRVALVNVYGPTEVTIGCSAGRILPDSDTRCIGHPLGDSVAHVLAPGSNEHVKKGMAGELVIEGSLVANGYLNRPDAKGFCDINGRKMYRTGDIVRMDADSSILFLGRKDEQVKVRGQRLELGEVSEVIRSLSPTDIDVVTLLLNHPGTSKQFLVSFVASSGAAVRGELRWINENYKEINNSLRQACEQTLPAYMVPDFIIPISFIPLRDTSAKTDAKALEHMFHTLSLGELFGESSSLVNKPTTAPSRDLTSIEKQILTVVKSVVGQDDKRDARPGSTLFQLGLDSIASVKLSFKLKKLGFSTTVARLLQNPTIEELGRMKNALKESHDAEPSNSESITTRFEELEKKTMNSLKDRETTHIESIRPCMPLQEVLVAHTMSHGSEADNAYVSHMIFELDPAVVVEHVKAAWAAVVKNTELLRTCFIDRENDIVQLVIKENHATPVWKHLSNGTNMLKEELLSCKKEIADDIVTNIDKSPPVRFTLASCDGADETNEMSLFMLSIHHALYDMVSIEMIFQDFEVAYTDSSLPRRPSTLPLLEHIAAQQQNESKAKSYWTTLFDGYDHGIEKISPRTAQTTARTLNASLTTLESLCSQTNMTLSALIQGVFAYVLARTLKRPDLIFGVVLSGRSIDVEGIDAMAAPCISTIPQRLNIGTDGETIAELITTVQDRLFKSMEYQYTSLRSLSRWLEISGPLFSSLFSFTKLSPPEDSGSSKSRILKPTEGEMFLDFELALECEADPGTDTVTLRTRSTMFDKMEELDALLEQMESLVTSFTRGENKAVDGDFGSMLHTRLLPPHGSLQEESDDWSVLEQQIRDVVVAFSGALPNEVKRTTPFIKYGIDSITTIRFSTLLRKNGFWVSGADVLRNPSVAKLATHIQTTSSFNGTAKDSDNEASEPAGIGNWSKALLAGAVSTKVLDDVVAVYPLTPLQAGMISATVMMDPTLYAHHHPFRLPQGTSIDQVRSAWSRLVAKHDILRTSFHEINQPRPQLVGAVHQESILNWHEVATEDVQVAIDDLIKRTQFPSVSSFETPPVKATVIRSPEDMLLVVSLHHATYDGTSIRFIFEDLWAILRGNRVPERNPFYETAMKIHNMSSGSVGFWADSLSGYGGAAAIAEAEDIQNKMTSKTMLLAQDTSALEQWCTEKGVTIQTICQLAVSKAVCAQTKSRDVVLGQVHAARLDINGADKVAGPMLNTVPLRLCIYDDSFTNHDYLRDLQAFQNKSLDHLHASLSDIQRLWRKENGRDGQLFEVLFIFRKGEDATEAPFWQPFEPEGSKESLPPSHYDLVIEVHQKSRGGLELEVHSRFADDTTSNLMSLLVESFESIRKHPDELAISSPGVLSKVPKPGLTRETGAVPTSPFDQSAIDQFLDPLRKVLSETTDTPVSSIDAQTSIFSIGVDSIVAIRVAGACRKAHIPLHTMEIMRNAKIGKLCEVAFAKSGQAAPNRSTTESNGVAPLLDQEVKKAAASKLGRAEAEIQEILPVLPGQEYHLACWLTSGKTLLEPVWVFKAENGLDAGRLRDTWISLVQKNDSLRTCFAQVKPTLAVQAILKPDCVDAAKSFTVQQVPENMTMEEYVKSEIHHLSLSPSSLYEPPVRIVLIQGGREGVSVLLRLHHALYDAWSMGILIDELSSLYCGTMQKPCPPLSVSHFAQFTQQKLRGKNEEQFWTETLGQCDPTILTPKADINTDSKSCNRAFVSFECVDVSMGALKSAARAFGITPQCLIQVAFGRMLSDVTESSSPVFGYYTAGRSADLEGIEALASPTLNMLPVAVPKDLVASQLAGTSLSILLQSFQDRTNSQSDYEQSRLRDVIKWAPNKGVSPLFNAHLNILWNDEILLKPQVSKDTLLRPWPLGVPSDYASPTPLSRGSSVDGLDTSFLPTNVLFADVGPSRETANLAIGIGCDPTLRDAQGLEEIARMFSGHLSRLVGSRDLV</sequence>
<keyword id="KW-0436">Ligase</keyword>
<keyword id="KW-0511">Multifunctional enzyme</keyword>
<keyword id="KW-0596">Phosphopantetheine</keyword>
<keyword id="KW-0597">Phosphoprotein</keyword>
<keyword id="KW-0677">Repeat</keyword>
<proteinExistence type="evidence at transcript level"/>
<gene>
    <name evidence="5" type="primary">sidN</name>
</gene>
<feature type="chain" id="PRO_0000444380" description="Nonribosomal peptide synthetase sidN">
    <location>
        <begin position="1"/>
        <end position="4690"/>
    </location>
</feature>
<feature type="domain" description="Carrier 1" evidence="3 7">
    <location>
        <begin position="779"/>
        <end position="856"/>
    </location>
</feature>
<feature type="domain" description="Carrier 2" evidence="3 7">
    <location>
        <begin position="1889"/>
        <end position="1965"/>
    </location>
</feature>
<feature type="domain" description="Carrier 3" evidence="3 7">
    <location>
        <begin position="3002"/>
        <end position="3079"/>
    </location>
</feature>
<feature type="domain" description="Carrier 4" evidence="3 7">
    <location>
        <begin position="3564"/>
        <end position="3637"/>
    </location>
</feature>
<feature type="domain" description="Carrier 5" evidence="3 7">
    <location>
        <begin position="4119"/>
        <end position="4195"/>
    </location>
</feature>
<feature type="region of interest" description="Adenylation 1" evidence="2 7">
    <location>
        <begin position="238"/>
        <end position="656"/>
    </location>
</feature>
<feature type="region of interest" description="Condensation 1" evidence="2 7">
    <location>
        <begin position="924"/>
        <end position="1175"/>
    </location>
</feature>
<feature type="region of interest" description="Adenylation 2" evidence="2 7">
    <location>
        <begin position="1349"/>
        <end position="1760"/>
    </location>
</feature>
<feature type="region of interest" description="Condensation 2" evidence="2 7">
    <location>
        <begin position="2001"/>
        <end position="2285"/>
    </location>
</feature>
<feature type="region of interest" description="Adenylation 3" evidence="2 7">
    <location>
        <begin position="2464"/>
        <end position="2869"/>
    </location>
</feature>
<feature type="region of interest" description="Condensation 3" evidence="2 7">
    <location>
        <begin position="3121"/>
        <end position="3530"/>
    </location>
</feature>
<feature type="region of interest" description="Condensation 4" evidence="2 7">
    <location>
        <begin position="3679"/>
        <end position="4087"/>
    </location>
</feature>
<feature type="region of interest" description="Condensation 5" evidence="2 7">
    <location>
        <begin position="4262"/>
        <end position="4589"/>
    </location>
</feature>
<feature type="modified residue" description="O-(pantetheine 4'-phosphoryl)serine" evidence="3">
    <location>
        <position position="816"/>
    </location>
</feature>
<feature type="modified residue" description="O-(pantetheine 4'-phosphoryl)serine" evidence="3">
    <location>
        <position position="1926"/>
    </location>
</feature>
<feature type="modified residue" description="O-(pantetheine 4'-phosphoryl)serine" evidence="3">
    <location>
        <position position="3040"/>
    </location>
</feature>
<feature type="modified residue" description="O-(pantetheine 4'-phosphoryl)serine" evidence="3">
    <location>
        <position position="3598"/>
    </location>
</feature>
<feature type="modified residue" description="O-(pantetheine 4'-phosphoryl)serine" evidence="3">
    <location>
        <position position="4156"/>
    </location>
</feature>
<accession>K7NCV2</accession>
<reference key="1">
    <citation type="journal article" date="2013" name="PLoS Pathog.">
        <title>An extracellular siderophore is required to maintain the mutualistic interaction of Epichloe festucae with Lolium perenne.</title>
        <authorList>
            <person name="Johnson L.J."/>
            <person name="Koulman A."/>
            <person name="Christensen M."/>
            <person name="Lane G.A."/>
            <person name="Fraser K."/>
            <person name="Forester N."/>
            <person name="Johnson R.D."/>
            <person name="Bryan G.T."/>
            <person name="Rasmussen S."/>
        </authorList>
    </citation>
    <scope>NUCLEOTIDE SEQUENCE [GENOMIC DNA]</scope>
    <scope>FUNCTION</scope>
    <scope>DISRUPTION PHENOTYPE</scope>
    <scope>DOMAIN</scope>
    <scope>INDUCTION</scope>
    <scope>PATHWAY</scope>
    <source>
        <strain>Fl1</strain>
    </source>
</reference>
<comment type="function">
    <text evidence="4">Nonribosomal peptide synthetase required for the biosynthetis of epichloenin A, an extracellular siderophore that plays a crucial role in endophyte-grass symbioses (PubMed:23658520). SidN assembles epichloenin A by activating and incorporating three trans-anhydromevalonylhydroxyornithine (trans-AMHO), 1 glutamine and 4 glycine moieties (PubMed:23658520). Trans-AMHO is produced from L-ornithine via 2 steps involving a L-ornithine N(5)-monooxygenase and an AHMO-N(5)-transacylase that have still to be identified (PubMed:23658520). The third adenylation domain (A3) of sidN incorporates the hydroxamate groups of the siderophore which forms an octahedral iron complex (PubMed:23658520). The other component amino acids are assembled by sidN adenylation domains A1 and A2 (PubMed:23658520).</text>
</comment>
<comment type="pathway">
    <text evidence="4">Siderophore biosynthesis.</text>
</comment>
<comment type="induction">
    <text evidence="4">Expression is repressed by iron (PubMed:23658520).</text>
</comment>
<comment type="domain">
    <text evidence="1 7">NRP synthetases are composed of discrete domains (adenylation (A), thiolation (T) or peptidyl carrier protein (PCP) and condensation (C) domains) which when grouped together are referred to as a single module (By similarity). Each module is responsible for the recognition (via the A domain) and incorporation of a single amino acid into the growing peptide product (By similarity). Thus, an NRP synthetase is generally composed of one or more modules and can terminate in a thioesterase domain (TE) that releases the newly synthesized peptide from the enzyme (By similarity). Occasionally, methyltransferase domains (responsible for amino acid methylation) are present within the NRP synthetase (By similarity). SdiN has the following architecture: A-T-C-A-T-C-A-T-C-T-C-T-C (PubMed:23658520).</text>
</comment>
<comment type="disruption phenotype">
    <text evidence="4">Leads to the accumulation of the intermediate N-5-trans-anhydromevalonyl-N-5-hydroxyornithine (trans-AMHO), displays sensitivity to oxidative stress and shows deficiencies in both polarized hyphal growth and sporulation (PubMed:23658520). Changes its interaction with the plant Lolium perenne from mutually beneficial to antagonistic (PubMed:23658520).</text>
</comment>
<comment type="similarity">
    <text evidence="6">Belongs to the NRP synthetase family.</text>
</comment>
<dbReference type="EC" id="6.3.2.-" evidence="7"/>
<dbReference type="EMBL" id="JN132407">
    <property type="protein sequence ID" value="AET13879.1"/>
    <property type="molecule type" value="Genomic_DNA"/>
</dbReference>
<dbReference type="SMR" id="K7NCV2"/>
<dbReference type="PHI-base" id="PHI:3607"/>
<dbReference type="GO" id="GO:0005737">
    <property type="term" value="C:cytoplasm"/>
    <property type="evidence" value="ECO:0007669"/>
    <property type="project" value="TreeGrafter"/>
</dbReference>
<dbReference type="GO" id="GO:0016874">
    <property type="term" value="F:ligase activity"/>
    <property type="evidence" value="ECO:0007669"/>
    <property type="project" value="UniProtKB-KW"/>
</dbReference>
<dbReference type="GO" id="GO:0031177">
    <property type="term" value="F:phosphopantetheine binding"/>
    <property type="evidence" value="ECO:0007669"/>
    <property type="project" value="InterPro"/>
</dbReference>
<dbReference type="GO" id="GO:0043041">
    <property type="term" value="P:amino acid activation for nonribosomal peptide biosynthetic process"/>
    <property type="evidence" value="ECO:0007669"/>
    <property type="project" value="TreeGrafter"/>
</dbReference>
<dbReference type="GO" id="GO:0044550">
    <property type="term" value="P:secondary metabolite biosynthetic process"/>
    <property type="evidence" value="ECO:0007669"/>
    <property type="project" value="TreeGrafter"/>
</dbReference>
<dbReference type="CDD" id="cd05918">
    <property type="entry name" value="A_NRPS_SidN3_like"/>
    <property type="match status" value="2"/>
</dbReference>
<dbReference type="FunFam" id="3.30.300.30:FF:000015">
    <property type="entry name" value="Nonribosomal peptide synthase SidD"/>
    <property type="match status" value="1"/>
</dbReference>
<dbReference type="FunFam" id="3.30.300.30:FF:000033">
    <property type="entry name" value="Nonribosomal siderophore peptide synthase SidC"/>
    <property type="match status" value="1"/>
</dbReference>
<dbReference type="FunFam" id="3.40.50.12780:FF:000024">
    <property type="entry name" value="Nonribosomal siderophore peptide synthase SidC"/>
    <property type="match status" value="2"/>
</dbReference>
<dbReference type="Gene3D" id="3.30.300.30">
    <property type="match status" value="3"/>
</dbReference>
<dbReference type="Gene3D" id="1.10.1200.10">
    <property type="entry name" value="ACP-like"/>
    <property type="match status" value="3"/>
</dbReference>
<dbReference type="Gene3D" id="3.30.559.10">
    <property type="entry name" value="Chloramphenicol acetyltransferase-like domain"/>
    <property type="match status" value="5"/>
</dbReference>
<dbReference type="Gene3D" id="3.40.50.12780">
    <property type="entry name" value="N-terminal domain of ligase-like"/>
    <property type="match status" value="3"/>
</dbReference>
<dbReference type="Gene3D" id="3.30.559.30">
    <property type="entry name" value="Nonribosomal peptide synthetase, condensation domain"/>
    <property type="match status" value="5"/>
</dbReference>
<dbReference type="InterPro" id="IPR036736">
    <property type="entry name" value="ACP-like_sf"/>
</dbReference>
<dbReference type="InterPro" id="IPR045851">
    <property type="entry name" value="AMP-bd_C_sf"/>
</dbReference>
<dbReference type="InterPro" id="IPR020845">
    <property type="entry name" value="AMP-binding_CS"/>
</dbReference>
<dbReference type="InterPro" id="IPR000873">
    <property type="entry name" value="AMP-dep_synth/lig_dom"/>
</dbReference>
<dbReference type="InterPro" id="IPR042099">
    <property type="entry name" value="ANL_N_sf"/>
</dbReference>
<dbReference type="InterPro" id="IPR023213">
    <property type="entry name" value="CAT-like_dom_sf"/>
</dbReference>
<dbReference type="InterPro" id="IPR001242">
    <property type="entry name" value="Condensatn"/>
</dbReference>
<dbReference type="InterPro" id="IPR020806">
    <property type="entry name" value="PKS_PP-bd"/>
</dbReference>
<dbReference type="InterPro" id="IPR009081">
    <property type="entry name" value="PP-bd_ACP"/>
</dbReference>
<dbReference type="InterPro" id="IPR006162">
    <property type="entry name" value="Ppantetheine_attach_site"/>
</dbReference>
<dbReference type="NCBIfam" id="NF003417">
    <property type="entry name" value="PRK04813.1"/>
    <property type="match status" value="3"/>
</dbReference>
<dbReference type="PANTHER" id="PTHR45527:SF1">
    <property type="entry name" value="FATTY ACID SYNTHASE"/>
    <property type="match status" value="1"/>
</dbReference>
<dbReference type="PANTHER" id="PTHR45527">
    <property type="entry name" value="NONRIBOSOMAL PEPTIDE SYNTHETASE"/>
    <property type="match status" value="1"/>
</dbReference>
<dbReference type="Pfam" id="PF00501">
    <property type="entry name" value="AMP-binding"/>
    <property type="match status" value="3"/>
</dbReference>
<dbReference type="Pfam" id="PF00668">
    <property type="entry name" value="Condensation"/>
    <property type="match status" value="5"/>
</dbReference>
<dbReference type="Pfam" id="PF00550">
    <property type="entry name" value="PP-binding"/>
    <property type="match status" value="4"/>
</dbReference>
<dbReference type="SMART" id="SM00823">
    <property type="entry name" value="PKS_PP"/>
    <property type="match status" value="4"/>
</dbReference>
<dbReference type="SUPFAM" id="SSF56801">
    <property type="entry name" value="Acetyl-CoA synthetase-like"/>
    <property type="match status" value="3"/>
</dbReference>
<dbReference type="SUPFAM" id="SSF47336">
    <property type="entry name" value="ACP-like"/>
    <property type="match status" value="4"/>
</dbReference>
<dbReference type="SUPFAM" id="SSF52777">
    <property type="entry name" value="CoA-dependent acyltransferases"/>
    <property type="match status" value="10"/>
</dbReference>
<dbReference type="PROSITE" id="PS00455">
    <property type="entry name" value="AMP_BINDING"/>
    <property type="match status" value="3"/>
</dbReference>
<dbReference type="PROSITE" id="PS50075">
    <property type="entry name" value="CARRIER"/>
    <property type="match status" value="5"/>
</dbReference>
<dbReference type="PROSITE" id="PS00012">
    <property type="entry name" value="PHOSPHOPANTETHEINE"/>
    <property type="match status" value="3"/>
</dbReference>